<proteinExistence type="inferred from homology"/>
<comment type="function">
    <text evidence="1">Catalyzes the formation of 6,7-dimethyl-8-ribityllumazine by condensation of 5-amino-6-(D-ribitylamino)uracil with 3,4-dihydroxy-2-butanone 4-phosphate. This is the penultimate step in the biosynthesis of riboflavin.</text>
</comment>
<comment type="catalytic activity">
    <reaction evidence="1">
        <text>(2S)-2-hydroxy-3-oxobutyl phosphate + 5-amino-6-(D-ribitylamino)uracil = 6,7-dimethyl-8-(1-D-ribityl)lumazine + phosphate + 2 H2O + H(+)</text>
        <dbReference type="Rhea" id="RHEA:26152"/>
        <dbReference type="ChEBI" id="CHEBI:15377"/>
        <dbReference type="ChEBI" id="CHEBI:15378"/>
        <dbReference type="ChEBI" id="CHEBI:15934"/>
        <dbReference type="ChEBI" id="CHEBI:43474"/>
        <dbReference type="ChEBI" id="CHEBI:58201"/>
        <dbReference type="ChEBI" id="CHEBI:58830"/>
        <dbReference type="EC" id="2.5.1.78"/>
    </reaction>
</comment>
<comment type="pathway">
    <text evidence="1">Cofactor biosynthesis; riboflavin biosynthesis; riboflavin from 2-hydroxy-3-oxobutyl phosphate and 5-amino-6-(D-ribitylamino)uracil: step 1/2.</text>
</comment>
<comment type="similarity">
    <text evidence="1">Belongs to the DMRL synthase family.</text>
</comment>
<name>RISB_METS3</name>
<organism>
    <name type="scientific">Methanobrevibacter smithii (strain ATCC 35061 / DSM 861 / OCM 144 / PS)</name>
    <dbReference type="NCBI Taxonomy" id="420247"/>
    <lineage>
        <taxon>Archaea</taxon>
        <taxon>Methanobacteriati</taxon>
        <taxon>Methanobacteriota</taxon>
        <taxon>Methanomada group</taxon>
        <taxon>Methanobacteria</taxon>
        <taxon>Methanobacteriales</taxon>
        <taxon>Methanobacteriaceae</taxon>
        <taxon>Methanobrevibacter</taxon>
    </lineage>
</organism>
<accession>A5UMS3</accession>
<gene>
    <name evidence="1" type="primary">ribH</name>
    <name type="ordered locus">Msm_1296</name>
</gene>
<protein>
    <recommendedName>
        <fullName evidence="1">6,7-dimethyl-8-ribityllumazine synthase</fullName>
        <shortName evidence="1">DMRL synthase</shortName>
        <shortName evidence="1">LS</shortName>
        <shortName evidence="1">Lumazine synthase</shortName>
        <ecNumber evidence="1">2.5.1.78</ecNumber>
    </recommendedName>
</protein>
<keyword id="KW-0686">Riboflavin biosynthesis</keyword>
<keyword id="KW-0808">Transferase</keyword>
<evidence type="ECO:0000255" key="1">
    <source>
        <dbReference type="HAMAP-Rule" id="MF_00178"/>
    </source>
</evidence>
<feature type="chain" id="PRO_1000040452" description="6,7-dimethyl-8-ribityllumazine synthase">
    <location>
        <begin position="1"/>
        <end position="138"/>
    </location>
</feature>
<feature type="active site" description="Proton donor" evidence="1">
    <location>
        <position position="77"/>
    </location>
</feature>
<feature type="binding site" evidence="1">
    <location>
        <position position="13"/>
    </location>
    <ligand>
        <name>5-amino-6-(D-ribitylamino)uracil</name>
        <dbReference type="ChEBI" id="CHEBI:15934"/>
    </ligand>
</feature>
<feature type="binding site" evidence="1">
    <location>
        <begin position="45"/>
        <end position="47"/>
    </location>
    <ligand>
        <name>5-amino-6-(D-ribitylamino)uracil</name>
        <dbReference type="ChEBI" id="CHEBI:15934"/>
    </ligand>
</feature>
<feature type="binding site" evidence="1">
    <location>
        <begin position="69"/>
        <end position="71"/>
    </location>
    <ligand>
        <name>5-amino-6-(D-ribitylamino)uracil</name>
        <dbReference type="ChEBI" id="CHEBI:15934"/>
    </ligand>
</feature>
<feature type="binding site" evidence="1">
    <location>
        <begin position="74"/>
        <end position="75"/>
    </location>
    <ligand>
        <name>(2S)-2-hydroxy-3-oxobutyl phosphate</name>
        <dbReference type="ChEBI" id="CHEBI:58830"/>
    </ligand>
</feature>
<feature type="binding site" evidence="1">
    <location>
        <position position="102"/>
    </location>
    <ligand>
        <name>5-amino-6-(D-ribitylamino)uracil</name>
        <dbReference type="ChEBI" id="CHEBI:15934"/>
    </ligand>
</feature>
<feature type="binding site" evidence="1">
    <location>
        <position position="117"/>
    </location>
    <ligand>
        <name>(2S)-2-hydroxy-3-oxobutyl phosphate</name>
        <dbReference type="ChEBI" id="CHEBI:58830"/>
    </ligand>
</feature>
<dbReference type="EC" id="2.5.1.78" evidence="1"/>
<dbReference type="EMBL" id="CP000678">
    <property type="protein sequence ID" value="ABQ87501.1"/>
    <property type="molecule type" value="Genomic_DNA"/>
</dbReference>
<dbReference type="RefSeq" id="WP_004032619.1">
    <property type="nucleotide sequence ID" value="NZ_CP117965.1"/>
</dbReference>
<dbReference type="SMR" id="A5UMS3"/>
<dbReference type="STRING" id="420247.Msm_1296"/>
<dbReference type="EnsemblBacteria" id="ABQ87501">
    <property type="protein sequence ID" value="ABQ87501"/>
    <property type="gene ID" value="Msm_1296"/>
</dbReference>
<dbReference type="GeneID" id="78817949"/>
<dbReference type="KEGG" id="msi:Msm_1296"/>
<dbReference type="PATRIC" id="fig|420247.28.peg.1293"/>
<dbReference type="eggNOG" id="arCOG01323">
    <property type="taxonomic scope" value="Archaea"/>
</dbReference>
<dbReference type="HOGENOM" id="CLU_089358_3_1_2"/>
<dbReference type="UniPathway" id="UPA00275">
    <property type="reaction ID" value="UER00404"/>
</dbReference>
<dbReference type="Proteomes" id="UP000001992">
    <property type="component" value="Chromosome"/>
</dbReference>
<dbReference type="GO" id="GO:0009349">
    <property type="term" value="C:riboflavin synthase complex"/>
    <property type="evidence" value="ECO:0007669"/>
    <property type="project" value="InterPro"/>
</dbReference>
<dbReference type="GO" id="GO:0000906">
    <property type="term" value="F:6,7-dimethyl-8-ribityllumazine synthase activity"/>
    <property type="evidence" value="ECO:0007669"/>
    <property type="project" value="UniProtKB-UniRule"/>
</dbReference>
<dbReference type="GO" id="GO:0009231">
    <property type="term" value="P:riboflavin biosynthetic process"/>
    <property type="evidence" value="ECO:0007669"/>
    <property type="project" value="UniProtKB-UniRule"/>
</dbReference>
<dbReference type="CDD" id="cd09211">
    <property type="entry name" value="Lumazine_synthase_archaeal"/>
    <property type="match status" value="1"/>
</dbReference>
<dbReference type="FunFam" id="3.40.50.960:FF:000003">
    <property type="entry name" value="6,7-dimethyl-8-ribityllumazine synthase"/>
    <property type="match status" value="1"/>
</dbReference>
<dbReference type="Gene3D" id="3.40.50.960">
    <property type="entry name" value="Lumazine/riboflavin synthase"/>
    <property type="match status" value="1"/>
</dbReference>
<dbReference type="HAMAP" id="MF_00178">
    <property type="entry name" value="Lumazine_synth"/>
    <property type="match status" value="1"/>
</dbReference>
<dbReference type="InterPro" id="IPR034964">
    <property type="entry name" value="LS"/>
</dbReference>
<dbReference type="InterPro" id="IPR002180">
    <property type="entry name" value="LS/RS"/>
</dbReference>
<dbReference type="InterPro" id="IPR036467">
    <property type="entry name" value="LS/RS_sf"/>
</dbReference>
<dbReference type="NCBIfam" id="TIGR00114">
    <property type="entry name" value="lumazine-synth"/>
    <property type="match status" value="1"/>
</dbReference>
<dbReference type="PANTHER" id="PTHR21058:SF0">
    <property type="entry name" value="6,7-DIMETHYL-8-RIBITYLLUMAZINE SYNTHASE"/>
    <property type="match status" value="1"/>
</dbReference>
<dbReference type="PANTHER" id="PTHR21058">
    <property type="entry name" value="6,7-DIMETHYL-8-RIBITYLLUMAZINE SYNTHASE DMRL SYNTHASE LUMAZINE SYNTHASE"/>
    <property type="match status" value="1"/>
</dbReference>
<dbReference type="Pfam" id="PF00885">
    <property type="entry name" value="DMRL_synthase"/>
    <property type="match status" value="1"/>
</dbReference>
<dbReference type="SUPFAM" id="SSF52121">
    <property type="entry name" value="Lumazine synthase"/>
    <property type="match status" value="1"/>
</dbReference>
<reference key="1">
    <citation type="journal article" date="2007" name="Proc. Natl. Acad. Sci. U.S.A.">
        <title>Genomic and metabolic adaptations of Methanobrevibacter smithii to the human gut.</title>
        <authorList>
            <person name="Samuel B.S."/>
            <person name="Hansen E.E."/>
            <person name="Manchester J.K."/>
            <person name="Coutinho P.M."/>
            <person name="Henrissat B."/>
            <person name="Fulton R."/>
            <person name="Latreille P."/>
            <person name="Kim K."/>
            <person name="Wilson R.K."/>
            <person name="Gordon J.I."/>
        </authorList>
    </citation>
    <scope>NUCLEOTIDE SEQUENCE [LARGE SCALE GENOMIC DNA]</scope>
    <source>
        <strain>ATCC 35061 / DSM 861 / OCM 144 / PS</strain>
    </source>
</reference>
<sequence length="138" mass="15089">MAKYNIGAVVAEFNYDITQMMLGLAKEEAKSRDCEITQVVTVPGVFDMALAIKKLLEKDEIDAVITLGAVIEGATDHDQIVAQHASRKIADLSLEYEKPVALGISGPGMTRLDAHKRVDYGKRAVEAAIKMCDRLNEI</sequence>